<gene>
    <name type="primary">Pou3f1</name>
    <name type="synonym">Oct-6</name>
    <name type="synonym">Otf-6</name>
    <name type="synonym">Otf6</name>
    <name type="synonym">Scip</name>
</gene>
<evidence type="ECO:0000250" key="1">
    <source>
        <dbReference type="UniProtKB" id="P21952"/>
    </source>
</evidence>
<evidence type="ECO:0000255" key="2">
    <source>
        <dbReference type="PROSITE-ProRule" id="PRU00108"/>
    </source>
</evidence>
<evidence type="ECO:0000255" key="3">
    <source>
        <dbReference type="PROSITE-ProRule" id="PRU00530"/>
    </source>
</evidence>
<evidence type="ECO:0000256" key="4">
    <source>
        <dbReference type="SAM" id="MobiDB-lite"/>
    </source>
</evidence>
<evidence type="ECO:0000269" key="5">
    <source>
    </source>
</evidence>
<evidence type="ECO:0000305" key="6"/>
<comment type="function">
    <text evidence="1 5">Transcription factor that binds to the octamer motif (5'-ATTTGCAT-3') (By similarity). Acts as a transcriptional activator when binding cooperatively with SOX4, SOX11, or SOX12 to gene promoters (By similarity). Acts as a transcriptional repressor of myelin-specific genes (PubMed:1975954).</text>
</comment>
<comment type="subcellular location">
    <subcellularLocation>
        <location evidence="1">Nucleus</location>
    </subcellularLocation>
</comment>
<comment type="tissue specificity">
    <text>Neural tissues and testis.</text>
</comment>
<comment type="induction">
    <text evidence="5">Transiently increased in rapidly dividing Schwann cells in response to sciatic nerve transection 2 days post-injury.</text>
</comment>
<comment type="similarity">
    <text evidence="6">Belongs to the POU transcription factor family. Class-3 subfamily.</text>
</comment>
<protein>
    <recommendedName>
        <fullName>POU domain, class 3, transcription factor 1</fullName>
    </recommendedName>
    <alternativeName>
        <fullName>Octamer-binding protein 6</fullName>
        <shortName>Oct-6</shortName>
    </alternativeName>
    <alternativeName>
        <fullName>Octamer-binding transcription factor 6</fullName>
        <shortName>OTF-6</shortName>
    </alternativeName>
    <alternativeName>
        <fullName>POU domain transcription factor SCIP</fullName>
    </alternativeName>
    <alternativeName>
        <fullName>Tst-1</fullName>
    </alternativeName>
</protein>
<reference key="1">
    <citation type="journal article" date="1990" name="Science">
        <title>Expression and activity of the POU transcription factor SCIP.</title>
        <authorList>
            <person name="Monuki E.S."/>
            <person name="Kuhn R."/>
            <person name="Weinmaster G."/>
            <person name="Trapp B.D."/>
            <person name="Lemke G."/>
        </authorList>
    </citation>
    <scope>NUCLEOTIDE SEQUENCE [MRNA]</scope>
    <scope>FUNCTION</scope>
    <scope>INDUCTION BY INJURY</scope>
</reference>
<reference key="2">
    <citation type="journal article" date="1989" name="Nature">
        <title>Expression of a large family of POU-domain regulatory genes in mammalian brain development.</title>
        <authorList>
            <person name="He X."/>
            <person name="Treacy M.N."/>
            <person name="Simmons D.M."/>
            <person name="Ingraham H.A."/>
            <person name="Swanson L.W."/>
            <person name="Rosenfeld M.G."/>
        </authorList>
    </citation>
    <scope>NUCLEOTIDE SEQUENCE [MRNA] OF 265-369</scope>
</reference>
<reference key="3">
    <citation type="journal article" date="1989" name="Nature">
        <authorList>
            <person name="He X."/>
            <person name="Treacy M.N."/>
            <person name="Simmons D.M."/>
            <person name="Ingraham H.A."/>
            <person name="Swanson L.W."/>
            <person name="Rosenfeld M.G."/>
        </authorList>
    </citation>
    <scope>ERRATUM OF PUBMED:2739723</scope>
    <scope>SEQUENCE REVISION TO 320</scope>
</reference>
<reference key="4">
    <citation type="journal article" date="1991" name="Mol. Cell. Biol.">
        <title>Tst-1, a member of the POU domain gene family, binds the promoter of the gene encoding the cell surface adhesion molecule P0.</title>
        <authorList>
            <person name="He X."/>
            <person name="Gerrero M.R."/>
            <person name="Simmons D.M."/>
            <person name="Park R.E."/>
            <person name="Lin C.R."/>
            <person name="Swanson L.W."/>
            <person name="Rosenfeld M.G."/>
        </authorList>
    </citation>
    <scope>NUCLEOTIDE SEQUENCE [MRNA] OF 35-451</scope>
</reference>
<feature type="chain" id="PRO_0000100722" description="POU domain, class 3, transcription factor 1">
    <location>
        <begin position="1"/>
        <end position="451"/>
    </location>
</feature>
<feature type="domain" description="POU-specific" evidence="3">
    <location>
        <begin position="247"/>
        <end position="321"/>
    </location>
</feature>
<feature type="DNA-binding region" description="Homeobox" evidence="2">
    <location>
        <begin position="339"/>
        <end position="398"/>
    </location>
</feature>
<feature type="region of interest" description="Disordered" evidence="4">
    <location>
        <begin position="1"/>
        <end position="21"/>
    </location>
</feature>
<feature type="region of interest" description="Disordered" evidence="4">
    <location>
        <begin position="69"/>
        <end position="114"/>
    </location>
</feature>
<feature type="region of interest" description="Disordered" evidence="4">
    <location>
        <begin position="134"/>
        <end position="154"/>
    </location>
</feature>
<feature type="region of interest" description="Disordered" evidence="4">
    <location>
        <begin position="186"/>
        <end position="253"/>
    </location>
</feature>
<feature type="region of interest" description="Disordered" evidence="4">
    <location>
        <begin position="395"/>
        <end position="451"/>
    </location>
</feature>
<feature type="compositionally biased region" description="Gly residues" evidence="4">
    <location>
        <begin position="11"/>
        <end position="20"/>
    </location>
</feature>
<feature type="compositionally biased region" description="Gly residues" evidence="4">
    <location>
        <begin position="76"/>
        <end position="85"/>
    </location>
</feature>
<feature type="compositionally biased region" description="Gly residues" evidence="4">
    <location>
        <begin position="95"/>
        <end position="112"/>
    </location>
</feature>
<feature type="compositionally biased region" description="Low complexity" evidence="4">
    <location>
        <begin position="134"/>
        <end position="145"/>
    </location>
</feature>
<feature type="compositionally biased region" description="Basic and acidic residues" evidence="4">
    <location>
        <begin position="190"/>
        <end position="199"/>
    </location>
</feature>
<feature type="compositionally biased region" description="Low complexity" evidence="4">
    <location>
        <begin position="220"/>
        <end position="232"/>
    </location>
</feature>
<feature type="compositionally biased region" description="Pro residues" evidence="4">
    <location>
        <begin position="427"/>
        <end position="436"/>
    </location>
</feature>
<feature type="sequence conflict" description="In Ref. 4; AAA42118/AAA42303." evidence="6" ref="4">
    <original>S</original>
    <variation>G</variation>
    <location>
        <position position="423"/>
    </location>
</feature>
<organism>
    <name type="scientific">Rattus norvegicus</name>
    <name type="common">Rat</name>
    <dbReference type="NCBI Taxonomy" id="10116"/>
    <lineage>
        <taxon>Eukaryota</taxon>
        <taxon>Metazoa</taxon>
        <taxon>Chordata</taxon>
        <taxon>Craniata</taxon>
        <taxon>Vertebrata</taxon>
        <taxon>Euteleostomi</taxon>
        <taxon>Mammalia</taxon>
        <taxon>Eutheria</taxon>
        <taxon>Euarchontoglires</taxon>
        <taxon>Glires</taxon>
        <taxon>Rodentia</taxon>
        <taxon>Myomorpha</taxon>
        <taxon>Muroidea</taxon>
        <taxon>Muridae</taxon>
        <taxon>Murinae</taxon>
        <taxon>Rattus</taxon>
    </lineage>
</organism>
<proteinExistence type="evidence at transcript level"/>
<sequence>MATTAQYLPRGPGGGAGGTGPLMHPDAAAAAAAAAAAERLHAGAAYREVQKLMHHEWLGAGAGHPVGLAHPQWLPTGGGGGGDWAGGPHLEHGKAGGGSTGRADDGGGGGGFHARLVHQGAAHAGAAWAQGGTAHHLGPAMSPSPGAGGGHQPQPLGLYAQAAYPGGGGGGLAGMLAAGGGGAGPGLHHALHEDGHEAQLEPSPPPHLGAHGHAHGHAHAGGLHAAAAHLHPGAGGGGSSVGEHSDEDAPSSDDLEQFAKQFKQRRIKLGFTQADVGLALGTLYGNVFSQTTICRFEALQLSFKNMCKLKPLLNKWLEETDSSSGSPTNLDKIAAQGRKRKKRTSIEVGVKGALESHFLKCPKPSAHEITGLADSLQLEKEVVRVWFCNRRQKEKRMTPAAGAGHPPMDDVYAPGELGPGGGSASPPSAPPPPPPAALHHHHHHTLPGSVQ</sequence>
<name>PO3F1_RAT</name>
<accession>P20267</accession>
<keyword id="KW-0010">Activator</keyword>
<keyword id="KW-0238">DNA-binding</keyword>
<keyword id="KW-0371">Homeobox</keyword>
<keyword id="KW-0539">Nucleus</keyword>
<keyword id="KW-1185">Reference proteome</keyword>
<keyword id="KW-0678">Repressor</keyword>
<keyword id="KW-0804">Transcription</keyword>
<keyword id="KW-0805">Transcription regulation</keyword>
<dbReference type="EMBL" id="M72711">
    <property type="protein sequence ID" value="AAA42118.1"/>
    <property type="molecule type" value="mRNA"/>
</dbReference>
<dbReference type="EMBL" id="M63712">
    <property type="protein sequence ID" value="AAA42303.1"/>
    <property type="molecule type" value="mRNA"/>
</dbReference>
<dbReference type="PIR" id="A40168">
    <property type="entry name" value="A40168"/>
</dbReference>
<dbReference type="RefSeq" id="NP_620193.1">
    <property type="nucleotide sequence ID" value="NM_138838.1"/>
</dbReference>
<dbReference type="SMR" id="P20267"/>
<dbReference type="FunCoup" id="P20267">
    <property type="interactions" value="160"/>
</dbReference>
<dbReference type="GlyGen" id="P20267">
    <property type="glycosylation" value="1 site, 1 O-linked glycan (1 site)"/>
</dbReference>
<dbReference type="PhosphoSitePlus" id="P20267"/>
<dbReference type="GeneID" id="192110"/>
<dbReference type="KEGG" id="rno:192110"/>
<dbReference type="UCSC" id="RGD:619767">
    <property type="organism name" value="rat"/>
</dbReference>
<dbReference type="AGR" id="RGD:619767"/>
<dbReference type="CTD" id="5453"/>
<dbReference type="RGD" id="619767">
    <property type="gene designation" value="Pou3f1"/>
</dbReference>
<dbReference type="InParanoid" id="P20267"/>
<dbReference type="OrthoDB" id="6358449at2759"/>
<dbReference type="PhylomeDB" id="P20267"/>
<dbReference type="PRO" id="PR:P20267"/>
<dbReference type="Proteomes" id="UP000002494">
    <property type="component" value="Unplaced"/>
</dbReference>
<dbReference type="GO" id="GO:0005634">
    <property type="term" value="C:nucleus"/>
    <property type="evidence" value="ECO:0000250"/>
    <property type="project" value="UniProtKB"/>
</dbReference>
<dbReference type="GO" id="GO:0005667">
    <property type="term" value="C:transcription regulator complex"/>
    <property type="evidence" value="ECO:0000266"/>
    <property type="project" value="RGD"/>
</dbReference>
<dbReference type="GO" id="GO:0003677">
    <property type="term" value="F:DNA binding"/>
    <property type="evidence" value="ECO:0000266"/>
    <property type="project" value="RGD"/>
</dbReference>
<dbReference type="GO" id="GO:0003700">
    <property type="term" value="F:DNA-binding transcription factor activity"/>
    <property type="evidence" value="ECO:0000314"/>
    <property type="project" value="RGD"/>
</dbReference>
<dbReference type="GO" id="GO:0000981">
    <property type="term" value="F:DNA-binding transcription factor activity, RNA polymerase II-specific"/>
    <property type="evidence" value="ECO:0000314"/>
    <property type="project" value="MGI"/>
</dbReference>
<dbReference type="GO" id="GO:0001227">
    <property type="term" value="F:DNA-binding transcription repressor activity, RNA polymerase II-specific"/>
    <property type="evidence" value="ECO:0000314"/>
    <property type="project" value="NTNU_SB"/>
</dbReference>
<dbReference type="GO" id="GO:0000978">
    <property type="term" value="F:RNA polymerase II cis-regulatory region sequence-specific DNA binding"/>
    <property type="evidence" value="ECO:0000314"/>
    <property type="project" value="NTNU_SB"/>
</dbReference>
<dbReference type="GO" id="GO:0043565">
    <property type="term" value="F:sequence-specific DNA binding"/>
    <property type="evidence" value="ECO:0000314"/>
    <property type="project" value="RGD"/>
</dbReference>
<dbReference type="GO" id="GO:1990837">
    <property type="term" value="F:sequence-specific double-stranded DNA binding"/>
    <property type="evidence" value="ECO:0000266"/>
    <property type="project" value="RGD"/>
</dbReference>
<dbReference type="GO" id="GO:0008544">
    <property type="term" value="P:epidermis development"/>
    <property type="evidence" value="ECO:0000266"/>
    <property type="project" value="RGD"/>
</dbReference>
<dbReference type="GO" id="GO:0030900">
    <property type="term" value="P:forebrain development"/>
    <property type="evidence" value="ECO:0000266"/>
    <property type="project" value="RGD"/>
</dbReference>
<dbReference type="GO" id="GO:0010001">
    <property type="term" value="P:glial cell differentiation"/>
    <property type="evidence" value="ECO:0000314"/>
    <property type="project" value="RGD"/>
</dbReference>
<dbReference type="GO" id="GO:0030216">
    <property type="term" value="P:keratinocyte differentiation"/>
    <property type="evidence" value="ECO:0000266"/>
    <property type="project" value="RGD"/>
</dbReference>
<dbReference type="GO" id="GO:0042552">
    <property type="term" value="P:myelination"/>
    <property type="evidence" value="ECO:0000266"/>
    <property type="project" value="RGD"/>
</dbReference>
<dbReference type="GO" id="GO:0022011">
    <property type="term" value="P:myelination in peripheral nervous system"/>
    <property type="evidence" value="ECO:0000266"/>
    <property type="project" value="RGD"/>
</dbReference>
<dbReference type="GO" id="GO:0045892">
    <property type="term" value="P:negative regulation of DNA-templated transcription"/>
    <property type="evidence" value="ECO:0000314"/>
    <property type="project" value="RGD"/>
</dbReference>
<dbReference type="GO" id="GO:0000122">
    <property type="term" value="P:negative regulation of transcription by RNA polymerase II"/>
    <property type="evidence" value="ECO:0000314"/>
    <property type="project" value="NTNU_SB"/>
</dbReference>
<dbReference type="GO" id="GO:0045893">
    <property type="term" value="P:positive regulation of DNA-templated transcription"/>
    <property type="evidence" value="ECO:0000250"/>
    <property type="project" value="UniProtKB"/>
</dbReference>
<dbReference type="GO" id="GO:0010628">
    <property type="term" value="P:positive regulation of gene expression"/>
    <property type="evidence" value="ECO:0000250"/>
    <property type="project" value="UniProtKB"/>
</dbReference>
<dbReference type="GO" id="GO:0045944">
    <property type="term" value="P:positive regulation of transcription by RNA polymerase II"/>
    <property type="evidence" value="ECO:0000314"/>
    <property type="project" value="MGI"/>
</dbReference>
<dbReference type="GO" id="GO:0006355">
    <property type="term" value="P:regulation of DNA-templated transcription"/>
    <property type="evidence" value="ECO:0000314"/>
    <property type="project" value="RGD"/>
</dbReference>
<dbReference type="GO" id="GO:0006357">
    <property type="term" value="P:regulation of transcription by RNA polymerase II"/>
    <property type="evidence" value="ECO:0000318"/>
    <property type="project" value="GO_Central"/>
</dbReference>
<dbReference type="GO" id="GO:0014044">
    <property type="term" value="P:Schwann cell development"/>
    <property type="evidence" value="ECO:0000266"/>
    <property type="project" value="RGD"/>
</dbReference>
<dbReference type="CDD" id="cd00086">
    <property type="entry name" value="homeodomain"/>
    <property type="match status" value="1"/>
</dbReference>
<dbReference type="FunFam" id="1.10.10.60:FF:000005">
    <property type="entry name" value="POU domain protein"/>
    <property type="match status" value="1"/>
</dbReference>
<dbReference type="FunFam" id="1.10.260.40:FF:000001">
    <property type="entry name" value="POU domain protein"/>
    <property type="match status" value="1"/>
</dbReference>
<dbReference type="Gene3D" id="1.10.10.60">
    <property type="entry name" value="Homeodomain-like"/>
    <property type="match status" value="1"/>
</dbReference>
<dbReference type="Gene3D" id="1.10.260.40">
    <property type="entry name" value="lambda repressor-like DNA-binding domains"/>
    <property type="match status" value="1"/>
</dbReference>
<dbReference type="InterPro" id="IPR001356">
    <property type="entry name" value="HD"/>
</dbReference>
<dbReference type="InterPro" id="IPR017970">
    <property type="entry name" value="Homeobox_CS"/>
</dbReference>
<dbReference type="InterPro" id="IPR009057">
    <property type="entry name" value="Homeodomain-like_sf"/>
</dbReference>
<dbReference type="InterPro" id="IPR010982">
    <property type="entry name" value="Lambda_DNA-bd_dom_sf"/>
</dbReference>
<dbReference type="InterPro" id="IPR013847">
    <property type="entry name" value="POU"/>
</dbReference>
<dbReference type="InterPro" id="IPR000327">
    <property type="entry name" value="POU_dom"/>
</dbReference>
<dbReference type="InterPro" id="IPR050255">
    <property type="entry name" value="POU_domain_TF"/>
</dbReference>
<dbReference type="InterPro" id="IPR016362">
    <property type="entry name" value="TF_POU_3"/>
</dbReference>
<dbReference type="PANTHER" id="PTHR11636">
    <property type="entry name" value="POU DOMAIN"/>
    <property type="match status" value="1"/>
</dbReference>
<dbReference type="PANTHER" id="PTHR11636:SF75">
    <property type="entry name" value="POU DOMAIN, CLASS 3, TRANSCRIPTION FACTOR 1"/>
    <property type="match status" value="1"/>
</dbReference>
<dbReference type="Pfam" id="PF00046">
    <property type="entry name" value="Homeodomain"/>
    <property type="match status" value="1"/>
</dbReference>
<dbReference type="Pfam" id="PF00157">
    <property type="entry name" value="Pou"/>
    <property type="match status" value="1"/>
</dbReference>
<dbReference type="PIRSF" id="PIRSF002629">
    <property type="entry name" value="Transcription_factor_POU"/>
    <property type="match status" value="1"/>
</dbReference>
<dbReference type="PRINTS" id="PR00028">
    <property type="entry name" value="POUDOMAIN"/>
</dbReference>
<dbReference type="SMART" id="SM00389">
    <property type="entry name" value="HOX"/>
    <property type="match status" value="1"/>
</dbReference>
<dbReference type="SMART" id="SM00352">
    <property type="entry name" value="POU"/>
    <property type="match status" value="1"/>
</dbReference>
<dbReference type="SUPFAM" id="SSF46689">
    <property type="entry name" value="Homeodomain-like"/>
    <property type="match status" value="1"/>
</dbReference>
<dbReference type="SUPFAM" id="SSF47413">
    <property type="entry name" value="lambda repressor-like DNA-binding domains"/>
    <property type="match status" value="1"/>
</dbReference>
<dbReference type="PROSITE" id="PS00027">
    <property type="entry name" value="HOMEOBOX_1"/>
    <property type="match status" value="1"/>
</dbReference>
<dbReference type="PROSITE" id="PS50071">
    <property type="entry name" value="HOMEOBOX_2"/>
    <property type="match status" value="1"/>
</dbReference>
<dbReference type="PROSITE" id="PS00035">
    <property type="entry name" value="POU_1"/>
    <property type="match status" value="1"/>
</dbReference>
<dbReference type="PROSITE" id="PS00465">
    <property type="entry name" value="POU_2"/>
    <property type="match status" value="1"/>
</dbReference>
<dbReference type="PROSITE" id="PS51179">
    <property type="entry name" value="POU_3"/>
    <property type="match status" value="1"/>
</dbReference>